<accession>P0CQ36</accession>
<accession>O93936</accession>
<accession>Q55SD0</accession>
<accession>Q5KGS6</accession>
<accession>Q92233</accession>
<keyword id="KW-0067">ATP-binding</keyword>
<keyword id="KW-0210">Decarboxylase</keyword>
<keyword id="KW-0456">Lyase</keyword>
<keyword id="KW-0547">Nucleotide-binding</keyword>
<keyword id="KW-0658">Purine biosynthesis</keyword>
<keyword id="KW-1185">Reference proteome</keyword>
<reference key="1">
    <citation type="journal article" date="2005" name="Science">
        <title>The genome of the basidiomycetous yeast and human pathogen Cryptococcus neoformans.</title>
        <authorList>
            <person name="Loftus B.J."/>
            <person name="Fung E."/>
            <person name="Roncaglia P."/>
            <person name="Rowley D."/>
            <person name="Amedeo P."/>
            <person name="Bruno D."/>
            <person name="Vamathevan J."/>
            <person name="Miranda M."/>
            <person name="Anderson I.J."/>
            <person name="Fraser J.A."/>
            <person name="Allen J.E."/>
            <person name="Bosdet I.E."/>
            <person name="Brent M.R."/>
            <person name="Chiu R."/>
            <person name="Doering T.L."/>
            <person name="Donlin M.J."/>
            <person name="D'Souza C.A."/>
            <person name="Fox D.S."/>
            <person name="Grinberg V."/>
            <person name="Fu J."/>
            <person name="Fukushima M."/>
            <person name="Haas B.J."/>
            <person name="Huang J.C."/>
            <person name="Janbon G."/>
            <person name="Jones S.J.M."/>
            <person name="Koo H.L."/>
            <person name="Krzywinski M.I."/>
            <person name="Kwon-Chung K.J."/>
            <person name="Lengeler K.B."/>
            <person name="Maiti R."/>
            <person name="Marra M.A."/>
            <person name="Marra R.E."/>
            <person name="Mathewson C.A."/>
            <person name="Mitchell T.G."/>
            <person name="Pertea M."/>
            <person name="Riggs F.R."/>
            <person name="Salzberg S.L."/>
            <person name="Schein J.E."/>
            <person name="Shvartsbeyn A."/>
            <person name="Shin H."/>
            <person name="Shumway M."/>
            <person name="Specht C.A."/>
            <person name="Suh B.B."/>
            <person name="Tenney A."/>
            <person name="Utterback T.R."/>
            <person name="Wickes B.L."/>
            <person name="Wortman J.R."/>
            <person name="Wye N.H."/>
            <person name="Kronstad J.W."/>
            <person name="Lodge J.K."/>
            <person name="Heitman J."/>
            <person name="Davis R.W."/>
            <person name="Fraser C.M."/>
            <person name="Hyman R.W."/>
        </authorList>
    </citation>
    <scope>NUCLEOTIDE SEQUENCE [LARGE SCALE GENOMIC DNA]</scope>
    <source>
        <strain>JEC21 / ATCC MYA-565</strain>
    </source>
</reference>
<feature type="chain" id="PRO_0000075023" description="Phosphoribosylaminoimidazole carboxylase">
    <location>
        <begin position="1"/>
        <end position="582"/>
    </location>
</feature>
<feature type="domain" description="ATP-grasp" evidence="1">
    <location>
        <begin position="114"/>
        <end position="305"/>
    </location>
</feature>
<feature type="binding site" evidence="1">
    <location>
        <begin position="143"/>
        <end position="200"/>
    </location>
    <ligand>
        <name>ATP</name>
        <dbReference type="ChEBI" id="CHEBI:30616"/>
    </ligand>
</feature>
<comment type="catalytic activity">
    <reaction>
        <text>5-amino-1-(5-phospho-D-ribosyl)imidazole-4-carboxylate + H(+) = 5-amino-1-(5-phospho-beta-D-ribosyl)imidazole + CO2</text>
        <dbReference type="Rhea" id="RHEA:10792"/>
        <dbReference type="ChEBI" id="CHEBI:15378"/>
        <dbReference type="ChEBI" id="CHEBI:16526"/>
        <dbReference type="ChEBI" id="CHEBI:77657"/>
        <dbReference type="ChEBI" id="CHEBI:137981"/>
        <dbReference type="EC" id="4.1.1.21"/>
    </reaction>
</comment>
<comment type="pathway">
    <text>Purine metabolism; IMP biosynthesis via de novo pathway; 5-amino-1-(5-phospho-D-ribosyl)imidazole-4-carboxylate from 5-amino-1-(5-phospho-D-ribosyl)imidazole (carboxylase route): step 1/1.</text>
</comment>
<comment type="similarity">
    <text evidence="2">In the C-terminal section; belongs to the AIR carboxylase family. Class I subfamily.</text>
</comment>
<dbReference type="EC" id="4.1.1.21"/>
<dbReference type="EMBL" id="AE017345">
    <property type="protein sequence ID" value="AAW43646.1"/>
    <property type="molecule type" value="Genomic_DNA"/>
</dbReference>
<dbReference type="RefSeq" id="XP_570953.1">
    <property type="nucleotide sequence ID" value="XM_570953.1"/>
</dbReference>
<dbReference type="SMR" id="P0CQ36"/>
<dbReference type="FunCoup" id="P0CQ36">
    <property type="interactions" value="71"/>
</dbReference>
<dbReference type="STRING" id="214684.P0CQ36"/>
<dbReference type="PaxDb" id="214684-P0CQ36"/>
<dbReference type="EnsemblFungi" id="AAW43646">
    <property type="protein sequence ID" value="AAW43646"/>
    <property type="gene ID" value="CNE02500"/>
</dbReference>
<dbReference type="GeneID" id="3257629"/>
<dbReference type="KEGG" id="cne:CNE02500"/>
<dbReference type="VEuPathDB" id="FungiDB:CNE02500"/>
<dbReference type="eggNOG" id="KOG2835">
    <property type="taxonomic scope" value="Eukaryota"/>
</dbReference>
<dbReference type="HOGENOM" id="CLU_011534_2_1_1"/>
<dbReference type="InParanoid" id="P0CQ36"/>
<dbReference type="OMA" id="PANVKWK"/>
<dbReference type="OrthoDB" id="15425at2759"/>
<dbReference type="UniPathway" id="UPA00074">
    <property type="reaction ID" value="UER00130"/>
</dbReference>
<dbReference type="Proteomes" id="UP000002149">
    <property type="component" value="Chromosome 5"/>
</dbReference>
<dbReference type="GO" id="GO:0005524">
    <property type="term" value="F:ATP binding"/>
    <property type="evidence" value="ECO:0007669"/>
    <property type="project" value="UniProtKB-KW"/>
</dbReference>
<dbReference type="GO" id="GO:0046872">
    <property type="term" value="F:metal ion binding"/>
    <property type="evidence" value="ECO:0007669"/>
    <property type="project" value="InterPro"/>
</dbReference>
<dbReference type="GO" id="GO:0004638">
    <property type="term" value="F:phosphoribosylaminoimidazole carboxylase activity"/>
    <property type="evidence" value="ECO:0007669"/>
    <property type="project" value="UniProtKB-EC"/>
</dbReference>
<dbReference type="GO" id="GO:0006189">
    <property type="term" value="P:'de novo' IMP biosynthetic process"/>
    <property type="evidence" value="ECO:0007669"/>
    <property type="project" value="UniProtKB-UniPathway"/>
</dbReference>
<dbReference type="FunFam" id="3.40.50.1970:FF:000013">
    <property type="entry name" value="Phosphoribosylaminoimidazole carboxylase"/>
    <property type="match status" value="1"/>
</dbReference>
<dbReference type="FunFam" id="3.30.470.20:FF:000037">
    <property type="entry name" value="Phosphoribosylaminoimidazole carboxylase, chloroplastic"/>
    <property type="match status" value="1"/>
</dbReference>
<dbReference type="Gene3D" id="3.40.50.1970">
    <property type="match status" value="1"/>
</dbReference>
<dbReference type="Gene3D" id="3.40.50.20">
    <property type="match status" value="1"/>
</dbReference>
<dbReference type="Gene3D" id="3.30.1490.20">
    <property type="entry name" value="ATP-grasp fold, A domain"/>
    <property type="match status" value="1"/>
</dbReference>
<dbReference type="Gene3D" id="3.30.470.20">
    <property type="entry name" value="ATP-grasp fold, B domain"/>
    <property type="match status" value="1"/>
</dbReference>
<dbReference type="HAMAP" id="MF_01929">
    <property type="entry name" value="PurE_classI"/>
    <property type="match status" value="1"/>
</dbReference>
<dbReference type="HAMAP" id="MF_01928">
    <property type="entry name" value="PurK"/>
    <property type="match status" value="1"/>
</dbReference>
<dbReference type="InterPro" id="IPR016301">
    <property type="entry name" value="Ade2_fungi/plant"/>
</dbReference>
<dbReference type="InterPro" id="IPR011761">
    <property type="entry name" value="ATP-grasp"/>
</dbReference>
<dbReference type="InterPro" id="IPR003135">
    <property type="entry name" value="ATP-grasp_carboxylate-amine"/>
</dbReference>
<dbReference type="InterPro" id="IPR013815">
    <property type="entry name" value="ATP_grasp_subdomain_1"/>
</dbReference>
<dbReference type="InterPro" id="IPR016185">
    <property type="entry name" value="PreATP-grasp_dom_sf"/>
</dbReference>
<dbReference type="InterPro" id="IPR033747">
    <property type="entry name" value="PurE_ClassI"/>
</dbReference>
<dbReference type="InterPro" id="IPR000031">
    <property type="entry name" value="PurE_dom"/>
</dbReference>
<dbReference type="InterPro" id="IPR005875">
    <property type="entry name" value="PurK"/>
</dbReference>
<dbReference type="InterPro" id="IPR040686">
    <property type="entry name" value="PurK_C"/>
</dbReference>
<dbReference type="InterPro" id="IPR054350">
    <property type="entry name" value="PurT/PurK_preATP-grasp"/>
</dbReference>
<dbReference type="InterPro" id="IPR011054">
    <property type="entry name" value="Rudment_hybrid_motif"/>
</dbReference>
<dbReference type="NCBIfam" id="NF004679">
    <property type="entry name" value="PRK06019.1-5"/>
    <property type="match status" value="1"/>
</dbReference>
<dbReference type="NCBIfam" id="TIGR01162">
    <property type="entry name" value="purE"/>
    <property type="match status" value="1"/>
</dbReference>
<dbReference type="NCBIfam" id="TIGR01161">
    <property type="entry name" value="purK"/>
    <property type="match status" value="1"/>
</dbReference>
<dbReference type="PANTHER" id="PTHR11609:SF5">
    <property type="entry name" value="PHOSPHORIBOSYLAMINOIMIDAZOLE CARBOXYLASE"/>
    <property type="match status" value="1"/>
</dbReference>
<dbReference type="PANTHER" id="PTHR11609">
    <property type="entry name" value="PURINE BIOSYNTHESIS PROTEIN 6/7, PUR6/7"/>
    <property type="match status" value="1"/>
</dbReference>
<dbReference type="Pfam" id="PF00731">
    <property type="entry name" value="AIRC"/>
    <property type="match status" value="1"/>
</dbReference>
<dbReference type="Pfam" id="PF02222">
    <property type="entry name" value="ATP-grasp"/>
    <property type="match status" value="1"/>
</dbReference>
<dbReference type="Pfam" id="PF17769">
    <property type="entry name" value="PurK_C"/>
    <property type="match status" value="1"/>
</dbReference>
<dbReference type="Pfam" id="PF22660">
    <property type="entry name" value="RS_preATP-grasp-like"/>
    <property type="match status" value="1"/>
</dbReference>
<dbReference type="PIRSF" id="PIRSF001340">
    <property type="entry name" value="AIR_carboxylase"/>
    <property type="match status" value="1"/>
</dbReference>
<dbReference type="SMART" id="SM01001">
    <property type="entry name" value="AIRC"/>
    <property type="match status" value="1"/>
</dbReference>
<dbReference type="SUPFAM" id="SSF56059">
    <property type="entry name" value="Glutathione synthetase ATP-binding domain-like"/>
    <property type="match status" value="1"/>
</dbReference>
<dbReference type="SUPFAM" id="SSF52255">
    <property type="entry name" value="N5-CAIR mutase (phosphoribosylaminoimidazole carboxylase, PurE)"/>
    <property type="match status" value="1"/>
</dbReference>
<dbReference type="SUPFAM" id="SSF52440">
    <property type="entry name" value="PreATP-grasp domain"/>
    <property type="match status" value="1"/>
</dbReference>
<dbReference type="SUPFAM" id="SSF51246">
    <property type="entry name" value="Rudiment single hybrid motif"/>
    <property type="match status" value="1"/>
</dbReference>
<dbReference type="PROSITE" id="PS50975">
    <property type="entry name" value="ATP_GRASP"/>
    <property type="match status" value="1"/>
</dbReference>
<protein>
    <recommendedName>
        <fullName>Phosphoribosylaminoimidazole carboxylase</fullName>
        <ecNumber>4.1.1.21</ecNumber>
    </recommendedName>
    <alternativeName>
        <fullName>AIR carboxylase</fullName>
        <shortName>AIRC</shortName>
    </alternativeName>
</protein>
<name>PUR6_CRYNJ</name>
<organism>
    <name type="scientific">Cryptococcus neoformans var. neoformans serotype D (strain JEC21 / ATCC MYA-565)</name>
    <name type="common">Filobasidiella neoformans</name>
    <dbReference type="NCBI Taxonomy" id="214684"/>
    <lineage>
        <taxon>Eukaryota</taxon>
        <taxon>Fungi</taxon>
        <taxon>Dikarya</taxon>
        <taxon>Basidiomycota</taxon>
        <taxon>Agaricomycotina</taxon>
        <taxon>Tremellomycetes</taxon>
        <taxon>Tremellales</taxon>
        <taxon>Cryptococcaceae</taxon>
        <taxon>Cryptococcus</taxon>
        <taxon>Cryptococcus neoformans species complex</taxon>
    </lineage>
</organism>
<proteinExistence type="inferred from homology"/>
<sequence>MAPRKTVGILGGGQLGRMLTHPAALLGIPLLILDSGSYTPAKQTLLPPPPHSHPDGPFTSETHIRKLASACDILTVEIEHVNADVLEAVEKEGLCEVQPSPQTIRLIQNKYDQKKYLAERGVAVAPFEELPANPTEEDFKAIAGRLGLPLMLKAKTLAYDGRGNSPLKSASSGDIQASLKFLGDRPLYAEGWAPFVKEVAVMVVRNKEGEVRSYDAVETIHRESILRVCLAPLRGEKGVNQRARELAEKAVGHLEGAGIFGVEMFLMPDGELLLNEIAPRPHNSGHHTIEACLTSQFENHLRAILSLPLGSTALRVPSAAMVNILGASSTMDAIDKMADNALTVPGAAVHLYGKAESRKARKMGHITVTAESDAELNERLRALLFAQPDAHADWIDLIAPPSPAPAHSHAKPLVGIIMGSDSDLPVMHPATKILEKFGVPYELTITSAHRTPERMVKYAKTAADRGLRAIIAGAGGAAHLPGMVASETSLPVIGVPVKASVLDGVDSLYSIVQMPRGIPCATVGINNSTNAALLAVRILGTSVPALNKATEEYSKALEEEVLAKADILEEEGWDKYIERLKK</sequence>
<gene>
    <name type="primary">ADE2</name>
    <name type="ordered locus">CNE02500</name>
</gene>
<evidence type="ECO:0000255" key="1">
    <source>
        <dbReference type="PROSITE-ProRule" id="PRU00409"/>
    </source>
</evidence>
<evidence type="ECO:0000305" key="2"/>